<comment type="function">
    <text>Multicopy suppressor of the HtrA (DegP) null phenotype. It is possibly a protease, not essential for bacterial viability.</text>
</comment>
<comment type="subcellular location">
    <subcellularLocation>
        <location>Cell inner membrane</location>
        <topology>Single-pass membrane protein</topology>
    </subcellularLocation>
</comment>
<comment type="similarity">
    <text evidence="3">Belongs to the peptidase S49 family.</text>
</comment>
<proteinExistence type="evidence at protein level"/>
<sequence length="349" mass="39366">MELLSEYGLFLAKIVTVVLAIAAIAAIIVNVAQRNKRQRGELRVNNLSEQYKEMKEELAAALMDSHQQKQWHKAQKKKHKQEAKAAKAKAKLGEVATDSKPRVWVLDFKGSMDAHEVNSLREEITAVLAAFKPQDQVVLRLESPGGMVHGYGLAASQLQRLRDKNIPLTVTVDKVAASGGYMMACVADKIVSAPFAIVGSIGVVAQMPNFNRFLKSKDIDIELHTAGQYKRTLTLLGENTEEGREKFREELNETHQLFKDFVKRMRPSLDIEQVATGEHWYGQQAVEKGLVDEINTSDEVILSLMEGREVVNVRYMQRKRLIDRFTGSAAESADRLLLRWWQRGQKPLM</sequence>
<feature type="chain" id="PRO_0000171448" description="Probable protease SohB">
    <location>
        <begin position="1"/>
        <end position="349"/>
    </location>
</feature>
<feature type="topological domain" description="Periplasmic" evidence="2">
    <location>
        <begin position="1"/>
        <end position="8"/>
    </location>
</feature>
<feature type="transmembrane region" description="Helical" evidence="2">
    <location>
        <begin position="9"/>
        <end position="29"/>
    </location>
</feature>
<feature type="topological domain" description="Cytoplasmic" evidence="2">
    <location>
        <begin position="30"/>
        <end position="349"/>
    </location>
</feature>
<feature type="active site" description="Nucleophile" evidence="1">
    <location>
        <position position="178"/>
    </location>
</feature>
<feature type="active site" description="Proton donor/acceptor" evidence="1">
    <location>
        <position position="230"/>
    </location>
</feature>
<feature type="sequence conflict" description="In Ref. 1; AAA24639." evidence="3" ref="1">
    <original>A</original>
    <variation>R</variation>
    <location>
        <position position="85"/>
    </location>
</feature>
<feature type="sequence conflict" description="In Ref. 1; AAA24639." evidence="3" ref="1">
    <original>A</original>
    <variation>R</variation>
    <location>
        <position position="90"/>
    </location>
</feature>
<feature type="sequence conflict" description="In Ref. 5." evidence="3" ref="5">
    <original>PQDQVV</original>
    <variation>HQPQVA</variation>
    <location>
        <begin position="133"/>
        <end position="138"/>
    </location>
</feature>
<feature type="sequence conflict" description="In Ref. 5." evidence="3" ref="5">
    <original>SPGGMVHGYGLA</original>
    <variation>ALVAWCMLRAG</variation>
    <location>
        <begin position="143"/>
        <end position="154"/>
    </location>
</feature>
<feature type="sequence conflict" description="In Ref. 5." evidence="3" ref="5">
    <original>K</original>
    <variation>R</variation>
    <location>
        <position position="164"/>
    </location>
</feature>
<feature type="sequence conflict" description="In Ref. 5." evidence="3" ref="5">
    <original>EKFREELNETHQLF</original>
    <variation>GKIPRRVERNASVV</variation>
    <location>
        <begin position="245"/>
        <end position="258"/>
    </location>
</feature>
<feature type="sequence conflict" description="In Ref. 1; AAA24639." evidence="3" ref="1">
    <original>T</original>
    <variation>A</variation>
    <location>
        <position position="296"/>
    </location>
</feature>
<evidence type="ECO:0000250" key="1"/>
<evidence type="ECO:0000255" key="2"/>
<evidence type="ECO:0000305" key="3"/>
<gene>
    <name type="primary">sohB</name>
    <name type="ordered locus">b1272</name>
    <name type="ordered locus">JW1264</name>
</gene>
<dbReference type="EC" id="3.4.21.-"/>
<dbReference type="EMBL" id="M73320">
    <property type="protein sequence ID" value="AAA24639.1"/>
    <property type="molecule type" value="Genomic_DNA"/>
</dbReference>
<dbReference type="EMBL" id="U00096">
    <property type="protein sequence ID" value="AAC74354.1"/>
    <property type="molecule type" value="Genomic_DNA"/>
</dbReference>
<dbReference type="EMBL" id="AP009048">
    <property type="protein sequence ID" value="BAA14809.1"/>
    <property type="molecule type" value="Genomic_DNA"/>
</dbReference>
<dbReference type="PIR" id="C64875">
    <property type="entry name" value="C64875"/>
</dbReference>
<dbReference type="RefSeq" id="NP_415788.1">
    <property type="nucleotide sequence ID" value="NC_000913.3"/>
</dbReference>
<dbReference type="RefSeq" id="WP_000422045.1">
    <property type="nucleotide sequence ID" value="NZ_STEB01000005.1"/>
</dbReference>
<dbReference type="SMR" id="P0AG14"/>
<dbReference type="BioGRID" id="4259577">
    <property type="interactions" value="71"/>
</dbReference>
<dbReference type="DIP" id="DIP-35930N"/>
<dbReference type="FunCoup" id="P0AG14">
    <property type="interactions" value="151"/>
</dbReference>
<dbReference type="IntAct" id="P0AG14">
    <property type="interactions" value="3"/>
</dbReference>
<dbReference type="STRING" id="511145.b1272"/>
<dbReference type="MEROPS" id="S49.002"/>
<dbReference type="jPOST" id="P0AG14"/>
<dbReference type="PaxDb" id="511145-b1272"/>
<dbReference type="EnsemblBacteria" id="AAC74354">
    <property type="protein sequence ID" value="AAC74354"/>
    <property type="gene ID" value="b1272"/>
</dbReference>
<dbReference type="GeneID" id="93775391"/>
<dbReference type="GeneID" id="945858"/>
<dbReference type="KEGG" id="ecj:JW1264"/>
<dbReference type="KEGG" id="eco:b1272"/>
<dbReference type="KEGG" id="ecoc:C3026_07455"/>
<dbReference type="PATRIC" id="fig|1411691.4.peg.1012"/>
<dbReference type="EchoBASE" id="EB0949"/>
<dbReference type="eggNOG" id="COG0616">
    <property type="taxonomic scope" value="Bacteria"/>
</dbReference>
<dbReference type="HOGENOM" id="CLU_070316_0_0_6"/>
<dbReference type="InParanoid" id="P0AG14"/>
<dbReference type="OMA" id="DIDYEQH"/>
<dbReference type="OrthoDB" id="5614232at2"/>
<dbReference type="PhylomeDB" id="P0AG14"/>
<dbReference type="BioCyc" id="EcoCyc:EG10956-MONOMER"/>
<dbReference type="PRO" id="PR:P0AG14"/>
<dbReference type="Proteomes" id="UP000000625">
    <property type="component" value="Chromosome"/>
</dbReference>
<dbReference type="GO" id="GO:0005886">
    <property type="term" value="C:plasma membrane"/>
    <property type="evidence" value="ECO:0000314"/>
    <property type="project" value="EcoCyc"/>
</dbReference>
<dbReference type="GO" id="GO:0004252">
    <property type="term" value="F:serine-type endopeptidase activity"/>
    <property type="evidence" value="ECO:0007669"/>
    <property type="project" value="InterPro"/>
</dbReference>
<dbReference type="GO" id="GO:0006508">
    <property type="term" value="P:proteolysis"/>
    <property type="evidence" value="ECO:0000316"/>
    <property type="project" value="EcoCyc"/>
</dbReference>
<dbReference type="CDD" id="cd07023">
    <property type="entry name" value="S49_Sppa_N_C"/>
    <property type="match status" value="1"/>
</dbReference>
<dbReference type="Gene3D" id="6.20.330.10">
    <property type="match status" value="1"/>
</dbReference>
<dbReference type="Gene3D" id="3.90.226.10">
    <property type="entry name" value="2-enoyl-CoA Hydratase, Chain A, domain 1"/>
    <property type="match status" value="1"/>
</dbReference>
<dbReference type="InterPro" id="IPR029045">
    <property type="entry name" value="ClpP/crotonase-like_dom_sf"/>
</dbReference>
<dbReference type="InterPro" id="IPR002142">
    <property type="entry name" value="Peptidase_S49"/>
</dbReference>
<dbReference type="InterPro" id="IPR013703">
    <property type="entry name" value="Peptidase_S49_N_proteobac"/>
</dbReference>
<dbReference type="InterPro" id="IPR047272">
    <property type="entry name" value="S49_SppA_C"/>
</dbReference>
<dbReference type="NCBIfam" id="NF008745">
    <property type="entry name" value="PRK11778.1"/>
    <property type="match status" value="1"/>
</dbReference>
<dbReference type="PANTHER" id="PTHR42987">
    <property type="entry name" value="PEPTIDASE S49"/>
    <property type="match status" value="1"/>
</dbReference>
<dbReference type="PANTHER" id="PTHR42987:SF4">
    <property type="entry name" value="PROTEASE SOHB-RELATED"/>
    <property type="match status" value="1"/>
</dbReference>
<dbReference type="Pfam" id="PF01343">
    <property type="entry name" value="Peptidase_S49"/>
    <property type="match status" value="1"/>
</dbReference>
<dbReference type="Pfam" id="PF08496">
    <property type="entry name" value="Peptidase_S49_N"/>
    <property type="match status" value="1"/>
</dbReference>
<dbReference type="SUPFAM" id="SSF52096">
    <property type="entry name" value="ClpP/crotonase"/>
    <property type="match status" value="1"/>
</dbReference>
<organism>
    <name type="scientific">Escherichia coli (strain K12)</name>
    <dbReference type="NCBI Taxonomy" id="83333"/>
    <lineage>
        <taxon>Bacteria</taxon>
        <taxon>Pseudomonadati</taxon>
        <taxon>Pseudomonadota</taxon>
        <taxon>Gammaproteobacteria</taxon>
        <taxon>Enterobacterales</taxon>
        <taxon>Enterobacteriaceae</taxon>
        <taxon>Escherichia</taxon>
    </lineage>
</organism>
<keyword id="KW-0997">Cell inner membrane</keyword>
<keyword id="KW-1003">Cell membrane</keyword>
<keyword id="KW-0378">Hydrolase</keyword>
<keyword id="KW-0472">Membrane</keyword>
<keyword id="KW-0645">Protease</keyword>
<keyword id="KW-1185">Reference proteome</keyword>
<keyword id="KW-0720">Serine protease</keyword>
<keyword id="KW-0812">Transmembrane</keyword>
<keyword id="KW-1133">Transmembrane helix</keyword>
<protein>
    <recommendedName>
        <fullName>Probable protease SohB</fullName>
        <ecNumber>3.4.21.-</ecNumber>
    </recommendedName>
</protein>
<name>SOHB_ECOLI</name>
<accession>P0AG14</accession>
<accession>P24213</accession>
<accession>P77676</accession>
<reference key="1">
    <citation type="journal article" date="1991" name="J. Bacteriol.">
        <title>Identification of the Escherichia coli sohB gene, a multicopy suppressor of the HtrA (DegP) null phenotype.</title>
        <authorList>
            <person name="Baird L."/>
            <person name="Lipinska B."/>
            <person name="Raina S."/>
            <person name="Georgopoulos C."/>
        </authorList>
    </citation>
    <scope>NUCLEOTIDE SEQUENCE [GENOMIC DNA]</scope>
</reference>
<reference key="2">
    <citation type="journal article" date="1996" name="DNA Res.">
        <title>A 570-kb DNA sequence of the Escherichia coli K-12 genome corresponding to the 28.0-40.1 min region on the linkage map.</title>
        <authorList>
            <person name="Aiba H."/>
            <person name="Baba T."/>
            <person name="Fujita K."/>
            <person name="Hayashi K."/>
            <person name="Inada T."/>
            <person name="Isono K."/>
            <person name="Itoh T."/>
            <person name="Kasai H."/>
            <person name="Kashimoto K."/>
            <person name="Kimura S."/>
            <person name="Kitakawa M."/>
            <person name="Kitagawa M."/>
            <person name="Makino K."/>
            <person name="Miki T."/>
            <person name="Mizobuchi K."/>
            <person name="Mori H."/>
            <person name="Mori T."/>
            <person name="Motomura K."/>
            <person name="Nakade S."/>
            <person name="Nakamura Y."/>
            <person name="Nashimoto H."/>
            <person name="Nishio Y."/>
            <person name="Oshima T."/>
            <person name="Saito N."/>
            <person name="Sampei G."/>
            <person name="Seki Y."/>
            <person name="Sivasundaram S."/>
            <person name="Tagami H."/>
            <person name="Takeda J."/>
            <person name="Takemoto K."/>
            <person name="Takeuchi Y."/>
            <person name="Wada C."/>
            <person name="Yamamoto Y."/>
            <person name="Horiuchi T."/>
        </authorList>
    </citation>
    <scope>NUCLEOTIDE SEQUENCE [LARGE SCALE GENOMIC DNA]</scope>
    <source>
        <strain>K12 / W3110 / ATCC 27325 / DSM 5911</strain>
    </source>
</reference>
<reference key="3">
    <citation type="journal article" date="1997" name="Science">
        <title>The complete genome sequence of Escherichia coli K-12.</title>
        <authorList>
            <person name="Blattner F.R."/>
            <person name="Plunkett G. III"/>
            <person name="Bloch C.A."/>
            <person name="Perna N.T."/>
            <person name="Burland V."/>
            <person name="Riley M."/>
            <person name="Collado-Vides J."/>
            <person name="Glasner J.D."/>
            <person name="Rode C.K."/>
            <person name="Mayhew G.F."/>
            <person name="Gregor J."/>
            <person name="Davis N.W."/>
            <person name="Kirkpatrick H.A."/>
            <person name="Goeden M.A."/>
            <person name="Rose D.J."/>
            <person name="Mau B."/>
            <person name="Shao Y."/>
        </authorList>
    </citation>
    <scope>NUCLEOTIDE SEQUENCE [LARGE SCALE GENOMIC DNA]</scope>
    <source>
        <strain>K12 / MG1655 / ATCC 47076</strain>
    </source>
</reference>
<reference key="4">
    <citation type="journal article" date="2006" name="Mol. Syst. Biol.">
        <title>Highly accurate genome sequences of Escherichia coli K-12 strains MG1655 and W3110.</title>
        <authorList>
            <person name="Hayashi K."/>
            <person name="Morooka N."/>
            <person name="Yamamoto Y."/>
            <person name="Fujita K."/>
            <person name="Isono K."/>
            <person name="Choi S."/>
            <person name="Ohtsubo E."/>
            <person name="Baba T."/>
            <person name="Wanner B.L."/>
            <person name="Mori H."/>
            <person name="Horiuchi T."/>
        </authorList>
    </citation>
    <scope>NUCLEOTIDE SEQUENCE [LARGE SCALE GENOMIC DNA]</scope>
    <source>
        <strain>K12 / W3110 / ATCC 27325 / DSM 5911</strain>
    </source>
</reference>
<reference key="5">
    <citation type="journal article" date="1986" name="J. Mol. Biol.">
        <title>Complete nucleotide sequence of the topA gene encoding Escherichia coli DNA topoisomerase I.</title>
        <authorList>
            <person name="Tse-Dinh Y.-C."/>
            <person name="Wang J.C."/>
        </authorList>
    </citation>
    <scope>NUCLEOTIDE SEQUENCE [GENOMIC DNA] OF 133-258</scope>
</reference>
<reference key="6">
    <citation type="journal article" date="2005" name="Science">
        <title>Global topology analysis of the Escherichia coli inner membrane proteome.</title>
        <authorList>
            <person name="Daley D.O."/>
            <person name="Rapp M."/>
            <person name="Granseth E."/>
            <person name="Melen K."/>
            <person name="Drew D."/>
            <person name="von Heijne G."/>
        </authorList>
    </citation>
    <scope>TOPOLOGY [LARGE SCALE ANALYSIS]</scope>
    <source>
        <strain>K12 / MG1655 / ATCC 47076</strain>
    </source>
</reference>